<protein>
    <recommendedName>
        <fullName evidence="1">Galactose-6-phosphate isomerase subunit LacA</fullName>
        <ecNumber evidence="1">5.3.1.26</ecNumber>
    </recommendedName>
</protein>
<gene>
    <name evidence="1" type="primary">lacA</name>
    <name type="ordered locus">SPD_1053</name>
</gene>
<comment type="catalytic activity">
    <reaction evidence="1">
        <text>aldehydo-D-galactose 6-phosphate = keto-D-tagatose 6-phosphate</text>
        <dbReference type="Rhea" id="RHEA:13033"/>
        <dbReference type="ChEBI" id="CHEBI:58255"/>
        <dbReference type="ChEBI" id="CHEBI:134283"/>
        <dbReference type="EC" id="5.3.1.26"/>
    </reaction>
</comment>
<comment type="pathway">
    <text evidence="1">Carbohydrate metabolism; D-galactose 6-phosphate degradation; D-tagatose 6-phosphate from D-galactose 6-phosphate: step 1/1.</text>
</comment>
<comment type="subunit">
    <text evidence="1">Heteromultimeric protein consisting of LacA and LacB.</text>
</comment>
<comment type="similarity">
    <text evidence="1">Belongs to the LacAB/RpiB family.</text>
</comment>
<organism>
    <name type="scientific">Streptococcus pneumoniae serotype 2 (strain D39 / NCTC 7466)</name>
    <dbReference type="NCBI Taxonomy" id="373153"/>
    <lineage>
        <taxon>Bacteria</taxon>
        <taxon>Bacillati</taxon>
        <taxon>Bacillota</taxon>
        <taxon>Bacilli</taxon>
        <taxon>Lactobacillales</taxon>
        <taxon>Streptococcaceae</taxon>
        <taxon>Streptococcus</taxon>
    </lineage>
</organism>
<proteinExistence type="inferred from homology"/>
<keyword id="KW-0413">Isomerase</keyword>
<keyword id="KW-0423">Lactose metabolism</keyword>
<keyword id="KW-1185">Reference proteome</keyword>
<sequence>MSIVIGADAAGLRLKEVVKDFLEKENFHLVDVTAEGQDFVDVTLAVAAEVNKEEQNLGIVIDAYGAGPFMVATKIKGMVAAEVSDERSAYMTRGHNNSRMITMGAQLVGDELAKNIAKGFVNGKYDGGRHQIRVDMLNKMG</sequence>
<name>LACA_STRP2</name>
<accession>Q04KC1</accession>
<reference key="1">
    <citation type="journal article" date="2007" name="J. Bacteriol.">
        <title>Genome sequence of Avery's virulent serotype 2 strain D39 of Streptococcus pneumoniae and comparison with that of unencapsulated laboratory strain R6.</title>
        <authorList>
            <person name="Lanie J.A."/>
            <person name="Ng W.-L."/>
            <person name="Kazmierczak K.M."/>
            <person name="Andrzejewski T.M."/>
            <person name="Davidsen T.M."/>
            <person name="Wayne K.J."/>
            <person name="Tettelin H."/>
            <person name="Glass J.I."/>
            <person name="Winkler M.E."/>
        </authorList>
    </citation>
    <scope>NUCLEOTIDE SEQUENCE [LARGE SCALE GENOMIC DNA]</scope>
    <source>
        <strain>D39 / NCTC 7466</strain>
    </source>
</reference>
<feature type="chain" id="PRO_1000068924" description="Galactose-6-phosphate isomerase subunit LacA">
    <location>
        <begin position="1"/>
        <end position="141"/>
    </location>
</feature>
<dbReference type="EC" id="5.3.1.26" evidence="1"/>
<dbReference type="EMBL" id="CP000410">
    <property type="protein sequence ID" value="ABJ54186.1"/>
    <property type="molecule type" value="Genomic_DNA"/>
</dbReference>
<dbReference type="RefSeq" id="WP_000029272.1">
    <property type="nucleotide sequence ID" value="NZ_JAMLJR010000006.1"/>
</dbReference>
<dbReference type="SMR" id="Q04KC1"/>
<dbReference type="PaxDb" id="373153-SPD_1053"/>
<dbReference type="GeneID" id="45653585"/>
<dbReference type="KEGG" id="spd:SPD_1053"/>
<dbReference type="eggNOG" id="COG0698">
    <property type="taxonomic scope" value="Bacteria"/>
</dbReference>
<dbReference type="HOGENOM" id="CLU_091396_4_2_9"/>
<dbReference type="BioCyc" id="SPNE373153:G1G6V-1144-MONOMER"/>
<dbReference type="UniPathway" id="UPA00702">
    <property type="reaction ID" value="UER00714"/>
</dbReference>
<dbReference type="Proteomes" id="UP000001452">
    <property type="component" value="Chromosome"/>
</dbReference>
<dbReference type="GO" id="GO:0050044">
    <property type="term" value="F:galactose-6-phosphate isomerase activity"/>
    <property type="evidence" value="ECO:0007669"/>
    <property type="project" value="UniProtKB-UniRule"/>
</dbReference>
<dbReference type="GO" id="GO:0004751">
    <property type="term" value="F:ribose-5-phosphate isomerase activity"/>
    <property type="evidence" value="ECO:0007669"/>
    <property type="project" value="TreeGrafter"/>
</dbReference>
<dbReference type="GO" id="GO:0019316">
    <property type="term" value="P:D-allose catabolic process"/>
    <property type="evidence" value="ECO:0007669"/>
    <property type="project" value="TreeGrafter"/>
</dbReference>
<dbReference type="GO" id="GO:0019388">
    <property type="term" value="P:galactose catabolic process"/>
    <property type="evidence" value="ECO:0007669"/>
    <property type="project" value="UniProtKB-UniPathway"/>
</dbReference>
<dbReference type="GO" id="GO:0019512">
    <property type="term" value="P:lactose catabolic process via tagatose-6-phosphate"/>
    <property type="evidence" value="ECO:0007669"/>
    <property type="project" value="UniProtKB-UniRule"/>
</dbReference>
<dbReference type="GO" id="GO:0009052">
    <property type="term" value="P:pentose-phosphate shunt, non-oxidative branch"/>
    <property type="evidence" value="ECO:0007669"/>
    <property type="project" value="TreeGrafter"/>
</dbReference>
<dbReference type="Gene3D" id="3.40.1400.10">
    <property type="entry name" value="Sugar-phosphate isomerase, RpiB/LacA/LacB"/>
    <property type="match status" value="1"/>
</dbReference>
<dbReference type="HAMAP" id="MF_01555">
    <property type="entry name" value="LacA"/>
    <property type="match status" value="1"/>
</dbReference>
<dbReference type="InterPro" id="IPR004783">
    <property type="entry name" value="LacA"/>
</dbReference>
<dbReference type="InterPro" id="IPR003500">
    <property type="entry name" value="RpiB_LacA_LacB"/>
</dbReference>
<dbReference type="InterPro" id="IPR036569">
    <property type="entry name" value="RpiB_LacA_LacB_sf"/>
</dbReference>
<dbReference type="NCBIfam" id="TIGR01118">
    <property type="entry name" value="lacA"/>
    <property type="match status" value="1"/>
</dbReference>
<dbReference type="NCBIfam" id="NF006380">
    <property type="entry name" value="PRK08621.1"/>
    <property type="match status" value="1"/>
</dbReference>
<dbReference type="NCBIfam" id="NF009257">
    <property type="entry name" value="PRK12613.1"/>
    <property type="match status" value="1"/>
</dbReference>
<dbReference type="NCBIfam" id="TIGR00689">
    <property type="entry name" value="rpiB_lacA_lacB"/>
    <property type="match status" value="1"/>
</dbReference>
<dbReference type="PANTHER" id="PTHR30345:SF5">
    <property type="entry name" value="GALACTOSE-6-PHOSPHATE ISOMERASE SUBUNIT LACA"/>
    <property type="match status" value="1"/>
</dbReference>
<dbReference type="PANTHER" id="PTHR30345">
    <property type="entry name" value="RIBOSE-5-PHOSPHATE ISOMERASE B"/>
    <property type="match status" value="1"/>
</dbReference>
<dbReference type="Pfam" id="PF02502">
    <property type="entry name" value="LacAB_rpiB"/>
    <property type="match status" value="1"/>
</dbReference>
<dbReference type="PIRSF" id="PIRSF005384">
    <property type="entry name" value="RpiB_LacA_B"/>
    <property type="match status" value="1"/>
</dbReference>
<dbReference type="SUPFAM" id="SSF89623">
    <property type="entry name" value="Ribose/Galactose isomerase RpiB/AlsB"/>
    <property type="match status" value="1"/>
</dbReference>
<evidence type="ECO:0000255" key="1">
    <source>
        <dbReference type="HAMAP-Rule" id="MF_01555"/>
    </source>
</evidence>